<organism>
    <name type="scientific">Bacillus licheniformis (strain ATCC 14580 / DSM 13 / JCM 2505 / CCUG 7422 / NBRC 12200 / NCIMB 9375 / NCTC 10341 / NRRL NRS-1264 / Gibson 46)</name>
    <dbReference type="NCBI Taxonomy" id="279010"/>
    <lineage>
        <taxon>Bacteria</taxon>
        <taxon>Bacillati</taxon>
        <taxon>Bacillota</taxon>
        <taxon>Bacilli</taxon>
        <taxon>Bacillales</taxon>
        <taxon>Bacillaceae</taxon>
        <taxon>Bacillus</taxon>
    </lineage>
</organism>
<sequence length="93" mass="10231">MLRLDLQFFASKKGVGSTKNGRDSEAKRLGAKRADGQFVSGGSILYRQRGTKIYPGENVGRGGDDTLYAKVDGTVKFERFGRNRKKVSVYPVA</sequence>
<protein>
    <recommendedName>
        <fullName evidence="2">Large ribosomal subunit protein bL27</fullName>
    </recommendedName>
    <alternativeName>
        <fullName evidence="3">50S ribosomal protein L27</fullName>
    </alternativeName>
</protein>
<comment type="PTM">
    <text evidence="1">The N-terminus is cleaved by ribosomal processing cysteine protease Prp.</text>
</comment>
<comment type="similarity">
    <text evidence="2">Belongs to the bacterial ribosomal protein bL27 family.</text>
</comment>
<gene>
    <name evidence="2" type="primary">rpmA</name>
    <name type="ordered locus">BLi02921</name>
    <name type="ordered locus">BL01160</name>
</gene>
<name>RL27_BACLD</name>
<dbReference type="EMBL" id="AE017333">
    <property type="protein sequence ID" value="AAU41789.1"/>
    <property type="molecule type" value="Genomic_DNA"/>
</dbReference>
<dbReference type="EMBL" id="CP000002">
    <property type="protein sequence ID" value="AAU24427.1"/>
    <property type="molecule type" value="Genomic_DNA"/>
</dbReference>
<dbReference type="RefSeq" id="WP_003184023.1">
    <property type="nucleotide sequence ID" value="NC_006322.1"/>
</dbReference>
<dbReference type="SMR" id="Q65GM5"/>
<dbReference type="STRING" id="279010.BL01160"/>
<dbReference type="GeneID" id="92860485"/>
<dbReference type="KEGG" id="bld:BLi02921"/>
<dbReference type="KEGG" id="bli:BL01160"/>
<dbReference type="eggNOG" id="COG0211">
    <property type="taxonomic scope" value="Bacteria"/>
</dbReference>
<dbReference type="HOGENOM" id="CLU_095424_4_0_9"/>
<dbReference type="Proteomes" id="UP000000606">
    <property type="component" value="Chromosome"/>
</dbReference>
<dbReference type="Bgee" id="BL01160">
    <property type="expression patterns" value="Expressed in skin epidermis and 11 other cell types or tissues"/>
</dbReference>
<dbReference type="GO" id="GO:0022625">
    <property type="term" value="C:cytosolic large ribosomal subunit"/>
    <property type="evidence" value="ECO:0007669"/>
    <property type="project" value="TreeGrafter"/>
</dbReference>
<dbReference type="GO" id="GO:0003735">
    <property type="term" value="F:structural constituent of ribosome"/>
    <property type="evidence" value="ECO:0007669"/>
    <property type="project" value="InterPro"/>
</dbReference>
<dbReference type="GO" id="GO:0006412">
    <property type="term" value="P:translation"/>
    <property type="evidence" value="ECO:0007669"/>
    <property type="project" value="UniProtKB-UniRule"/>
</dbReference>
<dbReference type="FunFam" id="2.40.50.100:FF:000004">
    <property type="entry name" value="50S ribosomal protein L27"/>
    <property type="match status" value="1"/>
</dbReference>
<dbReference type="Gene3D" id="2.40.50.100">
    <property type="match status" value="1"/>
</dbReference>
<dbReference type="HAMAP" id="MF_00539">
    <property type="entry name" value="Ribosomal_bL27"/>
    <property type="match status" value="1"/>
</dbReference>
<dbReference type="InterPro" id="IPR001684">
    <property type="entry name" value="Ribosomal_bL27"/>
</dbReference>
<dbReference type="InterPro" id="IPR018261">
    <property type="entry name" value="Ribosomal_bL27_CS"/>
</dbReference>
<dbReference type="NCBIfam" id="TIGR00062">
    <property type="entry name" value="L27"/>
    <property type="match status" value="1"/>
</dbReference>
<dbReference type="PANTHER" id="PTHR15893:SF0">
    <property type="entry name" value="LARGE RIBOSOMAL SUBUNIT PROTEIN BL27M"/>
    <property type="match status" value="1"/>
</dbReference>
<dbReference type="PANTHER" id="PTHR15893">
    <property type="entry name" value="RIBOSOMAL PROTEIN L27"/>
    <property type="match status" value="1"/>
</dbReference>
<dbReference type="Pfam" id="PF01016">
    <property type="entry name" value="Ribosomal_L27"/>
    <property type="match status" value="1"/>
</dbReference>
<dbReference type="PRINTS" id="PR00063">
    <property type="entry name" value="RIBOSOMALL27"/>
</dbReference>
<dbReference type="SUPFAM" id="SSF110324">
    <property type="entry name" value="Ribosomal L27 protein-like"/>
    <property type="match status" value="1"/>
</dbReference>
<dbReference type="PROSITE" id="PS00831">
    <property type="entry name" value="RIBOSOMAL_L27"/>
    <property type="match status" value="1"/>
</dbReference>
<reference key="1">
    <citation type="journal article" date="2004" name="J. Mol. Microbiol. Biotechnol.">
        <title>The complete genome sequence of Bacillus licheniformis DSM13, an organism with great industrial potential.</title>
        <authorList>
            <person name="Veith B."/>
            <person name="Herzberg C."/>
            <person name="Steckel S."/>
            <person name="Feesche J."/>
            <person name="Maurer K.H."/>
            <person name="Ehrenreich P."/>
            <person name="Baeumer S."/>
            <person name="Henne A."/>
            <person name="Liesegang H."/>
            <person name="Merkl R."/>
            <person name="Ehrenreich A."/>
            <person name="Gottschalk G."/>
        </authorList>
    </citation>
    <scope>NUCLEOTIDE SEQUENCE [LARGE SCALE GENOMIC DNA]</scope>
    <source>
        <strain>ATCC 14580 / DSM 13 / JCM 2505 / CCUG 7422 / NBRC 12200 / NCIMB 9375 / NCTC 10341 / NRRL NRS-1264 / Gibson 46</strain>
    </source>
</reference>
<reference key="2">
    <citation type="journal article" date="2004" name="Genome Biol.">
        <title>Complete genome sequence of the industrial bacterium Bacillus licheniformis and comparisons with closely related Bacillus species.</title>
        <authorList>
            <person name="Rey M.W."/>
            <person name="Ramaiya P."/>
            <person name="Nelson B.A."/>
            <person name="Brody-Karpin S.D."/>
            <person name="Zaretsky E.J."/>
            <person name="Tang M."/>
            <person name="Lopez de Leon A."/>
            <person name="Xiang H."/>
            <person name="Gusti V."/>
            <person name="Clausen I.G."/>
            <person name="Olsen P.B."/>
            <person name="Rasmussen M.D."/>
            <person name="Andersen J.T."/>
            <person name="Joergensen P.L."/>
            <person name="Larsen T.S."/>
            <person name="Sorokin A."/>
            <person name="Bolotin A."/>
            <person name="Lapidus A."/>
            <person name="Galleron N."/>
            <person name="Ehrlich S.D."/>
            <person name="Berka R.M."/>
        </authorList>
    </citation>
    <scope>NUCLEOTIDE SEQUENCE [LARGE SCALE GENOMIC DNA]</scope>
    <source>
        <strain>ATCC 14580 / DSM 13 / JCM 2505 / CCUG 7422 / NBRC 12200 / NCIMB 9375 / NCTC 10341 / NRRL NRS-1264 / Gibson 46</strain>
    </source>
</reference>
<evidence type="ECO:0000250" key="1">
    <source>
        <dbReference type="UniProtKB" id="Q2FXT0"/>
    </source>
</evidence>
<evidence type="ECO:0000255" key="2">
    <source>
        <dbReference type="HAMAP-Rule" id="MF_00539"/>
    </source>
</evidence>
<evidence type="ECO:0000305" key="3"/>
<feature type="propeptide" id="PRO_0000459862" evidence="1">
    <location>
        <begin position="1"/>
        <end position="9"/>
    </location>
</feature>
<feature type="chain" id="PRO_0000181041" description="Large ribosomal subunit protein bL27">
    <location>
        <begin position="10"/>
        <end position="93"/>
    </location>
</feature>
<proteinExistence type="inferred from homology"/>
<accession>Q65GM5</accession>
<accession>Q62S33</accession>
<keyword id="KW-1185">Reference proteome</keyword>
<keyword id="KW-0687">Ribonucleoprotein</keyword>
<keyword id="KW-0689">Ribosomal protein</keyword>